<feature type="chain" id="PRO_0000288643" description="Abscisic acid 8'-hydroxylase 1">
    <location>
        <begin position="1"/>
        <end position="471"/>
    </location>
</feature>
<feature type="transmembrane region" description="Helical" evidence="3">
    <location>
        <begin position="1"/>
        <end position="21"/>
    </location>
</feature>
<feature type="binding site" description="axial binding residue" evidence="1">
    <location>
        <position position="415"/>
    </location>
    <ligand>
        <name>heme</name>
        <dbReference type="ChEBI" id="CHEBI:30413"/>
    </ligand>
    <ligandPart>
        <name>Fe</name>
        <dbReference type="ChEBI" id="CHEBI:18248"/>
    </ligandPart>
</feature>
<gene>
    <name type="primary">CYP707A5</name>
    <name type="synonym">ABA8OX1</name>
    <name type="ORF">OsI_008437</name>
</gene>
<keyword id="KW-0349">Heme</keyword>
<keyword id="KW-0408">Iron</keyword>
<keyword id="KW-0472">Membrane</keyword>
<keyword id="KW-0479">Metal-binding</keyword>
<keyword id="KW-0503">Monooxygenase</keyword>
<keyword id="KW-0560">Oxidoreductase</keyword>
<keyword id="KW-1185">Reference proteome</keyword>
<keyword id="KW-0346">Stress response</keyword>
<keyword id="KW-0812">Transmembrane</keyword>
<keyword id="KW-1133">Transmembrane helix</keyword>
<evidence type="ECO:0000250" key="1"/>
<evidence type="ECO:0000250" key="2">
    <source>
        <dbReference type="UniProtKB" id="Q949P1"/>
    </source>
</evidence>
<evidence type="ECO:0000255" key="3"/>
<evidence type="ECO:0000269" key="4">
    <source>
    </source>
</evidence>
<evidence type="ECO:0000305" key="5"/>
<comment type="function">
    <text evidence="4">Involved in the oxidative degradation of abscisic acid.</text>
</comment>
<comment type="catalytic activity">
    <reaction evidence="2">
        <text>2-cis-(+)-abscisate + reduced [NADPH--hemoprotein reductase] + O2 = (+)-8'-hydroxyabscisate + oxidized [NADPH--hemoprotein reductase] + H2O + H(+)</text>
        <dbReference type="Rhea" id="RHEA:12897"/>
        <dbReference type="Rhea" id="RHEA-COMP:11964"/>
        <dbReference type="Rhea" id="RHEA-COMP:11965"/>
        <dbReference type="ChEBI" id="CHEBI:15377"/>
        <dbReference type="ChEBI" id="CHEBI:15378"/>
        <dbReference type="ChEBI" id="CHEBI:15379"/>
        <dbReference type="ChEBI" id="CHEBI:37569"/>
        <dbReference type="ChEBI" id="CHEBI:57618"/>
        <dbReference type="ChEBI" id="CHEBI:58210"/>
        <dbReference type="ChEBI" id="CHEBI:58490"/>
        <dbReference type="EC" id="1.14.14.137"/>
    </reaction>
</comment>
<comment type="cofactor">
    <cofactor evidence="1">
        <name>heme</name>
        <dbReference type="ChEBI" id="CHEBI:30413"/>
    </cofactor>
</comment>
<comment type="pathway">
    <text>Plant hormone degradation; abscisic acid degradation.</text>
</comment>
<comment type="subcellular location">
    <subcellularLocation>
        <location evidence="5">Membrane</location>
        <topology evidence="5">Single-pass membrane protein</topology>
    </subcellularLocation>
</comment>
<comment type="tissue specificity">
    <text evidence="4">In seedlings and expanding leaves.</text>
</comment>
<comment type="induction">
    <text evidence="4">By ethylene or abscisic acid treatments, and salt or osmotic stresses.</text>
</comment>
<comment type="similarity">
    <text evidence="5">Belongs to the cytochrome P450 family.</text>
</comment>
<sequence length="471" mass="52920">MGAFLLFVCVLAPFLLVCAVRGRRRQAGSSEAAACGLPLPPGSMGWPYVGETFQLYSSKNPNVFFNKKRNKYGPIFKTHILGCPCVMVSSPEAARFVLVTQAHLFKPTFPASKERMLGPQAIFFQQGDYHAHLRRIVSRAFSPESIRASVPAIEAIALRSLHSWDGQFVNTFQEMKTYALNVALLSIFGEEEMRYIEELKQCYLTLEKGYNSMPVNLPGTLFHKAMKARKRLGAIVAHIISARRERQRGNDLLGSFVDGREALTDAQIADNVIGVIFAARDTTASVLTWMVKFLGDHPAVLKAVTEEQLQIAKEKEASGEPLSWADTRRMKMTSRVIQETMRVASILSFTFREAVEDVEYQGYLIPKGWKVLPLFRNIHHNPDHFPCPEKFDPSRFEVAPKPNTFMPFGNGTHSCPGNELAKLEMLVLFHHLATKYRWSTSKSESGVQFGPFALPLNGLPMSFTRKNTEQE</sequence>
<name>ABAH1_ORYSI</name>
<protein>
    <recommendedName>
        <fullName>Abscisic acid 8'-hydroxylase 1</fullName>
        <shortName>ABA 8'-hydroxylase 1</shortName>
        <ecNumber evidence="2">1.14.14.137</ecNumber>
    </recommendedName>
    <alternativeName>
        <fullName>Cytochrome P450 707A5</fullName>
    </alternativeName>
    <alternativeName>
        <fullName>OsABA8ox1</fullName>
    </alternativeName>
</protein>
<organism>
    <name type="scientific">Oryza sativa subsp. indica</name>
    <name type="common">Rice</name>
    <dbReference type="NCBI Taxonomy" id="39946"/>
    <lineage>
        <taxon>Eukaryota</taxon>
        <taxon>Viridiplantae</taxon>
        <taxon>Streptophyta</taxon>
        <taxon>Embryophyta</taxon>
        <taxon>Tracheophyta</taxon>
        <taxon>Spermatophyta</taxon>
        <taxon>Magnoliopsida</taxon>
        <taxon>Liliopsida</taxon>
        <taxon>Poales</taxon>
        <taxon>Poaceae</taxon>
        <taxon>BOP clade</taxon>
        <taxon>Oryzoideae</taxon>
        <taxon>Oryzeae</taxon>
        <taxon>Oryzinae</taxon>
        <taxon>Oryza</taxon>
        <taxon>Oryza sativa</taxon>
    </lineage>
</organism>
<proteinExistence type="evidence at transcript level"/>
<reference key="1">
    <citation type="journal article" date="2006" name="Biochem. Biophys. Res. Commun.">
        <title>Characterization of genes encoding ABA 8'-hydroxylase in ethylene-induced stem growth of deepwater rice (Oryza sativa L.).</title>
        <authorList>
            <person name="Yang S.-H."/>
            <person name="Choi D."/>
        </authorList>
    </citation>
    <scope>NUCLEOTIDE SEQUENCE [MRNA]</scope>
    <scope>FUNCTION</scope>
    <scope>TISSUE SPECIFICITY</scope>
    <scope>INDUCTION</scope>
    <source>
        <strain>cv. Pin Gaew 56</strain>
    </source>
</reference>
<reference key="2">
    <citation type="journal article" date="2005" name="PLoS Biol.">
        <title>The genomes of Oryza sativa: a history of duplications.</title>
        <authorList>
            <person name="Yu J."/>
            <person name="Wang J."/>
            <person name="Lin W."/>
            <person name="Li S."/>
            <person name="Li H."/>
            <person name="Zhou J."/>
            <person name="Ni P."/>
            <person name="Dong W."/>
            <person name="Hu S."/>
            <person name="Zeng C."/>
            <person name="Zhang J."/>
            <person name="Zhang Y."/>
            <person name="Li R."/>
            <person name="Xu Z."/>
            <person name="Li S."/>
            <person name="Li X."/>
            <person name="Zheng H."/>
            <person name="Cong L."/>
            <person name="Lin L."/>
            <person name="Yin J."/>
            <person name="Geng J."/>
            <person name="Li G."/>
            <person name="Shi J."/>
            <person name="Liu J."/>
            <person name="Lv H."/>
            <person name="Li J."/>
            <person name="Wang J."/>
            <person name="Deng Y."/>
            <person name="Ran L."/>
            <person name="Shi X."/>
            <person name="Wang X."/>
            <person name="Wu Q."/>
            <person name="Li C."/>
            <person name="Ren X."/>
            <person name="Wang J."/>
            <person name="Wang X."/>
            <person name="Li D."/>
            <person name="Liu D."/>
            <person name="Zhang X."/>
            <person name="Ji Z."/>
            <person name="Zhao W."/>
            <person name="Sun Y."/>
            <person name="Zhang Z."/>
            <person name="Bao J."/>
            <person name="Han Y."/>
            <person name="Dong L."/>
            <person name="Ji J."/>
            <person name="Chen P."/>
            <person name="Wu S."/>
            <person name="Liu J."/>
            <person name="Xiao Y."/>
            <person name="Bu D."/>
            <person name="Tan J."/>
            <person name="Yang L."/>
            <person name="Ye C."/>
            <person name="Zhang J."/>
            <person name="Xu J."/>
            <person name="Zhou Y."/>
            <person name="Yu Y."/>
            <person name="Zhang B."/>
            <person name="Zhuang S."/>
            <person name="Wei H."/>
            <person name="Liu B."/>
            <person name="Lei M."/>
            <person name="Yu H."/>
            <person name="Li Y."/>
            <person name="Xu H."/>
            <person name="Wei S."/>
            <person name="He X."/>
            <person name="Fang L."/>
            <person name="Zhang Z."/>
            <person name="Zhang Y."/>
            <person name="Huang X."/>
            <person name="Su Z."/>
            <person name="Tong W."/>
            <person name="Li J."/>
            <person name="Tong Z."/>
            <person name="Li S."/>
            <person name="Ye J."/>
            <person name="Wang L."/>
            <person name="Fang L."/>
            <person name="Lei T."/>
            <person name="Chen C.-S."/>
            <person name="Chen H.-C."/>
            <person name="Xu Z."/>
            <person name="Li H."/>
            <person name="Huang H."/>
            <person name="Zhang F."/>
            <person name="Xu H."/>
            <person name="Li N."/>
            <person name="Zhao C."/>
            <person name="Li S."/>
            <person name="Dong L."/>
            <person name="Huang Y."/>
            <person name="Li L."/>
            <person name="Xi Y."/>
            <person name="Qi Q."/>
            <person name="Li W."/>
            <person name="Zhang B."/>
            <person name="Hu W."/>
            <person name="Zhang Y."/>
            <person name="Tian X."/>
            <person name="Jiao Y."/>
            <person name="Liang X."/>
            <person name="Jin J."/>
            <person name="Gao L."/>
            <person name="Zheng W."/>
            <person name="Hao B."/>
            <person name="Liu S.-M."/>
            <person name="Wang W."/>
            <person name="Yuan L."/>
            <person name="Cao M."/>
            <person name="McDermott J."/>
            <person name="Samudrala R."/>
            <person name="Wang J."/>
            <person name="Wong G.K.-S."/>
            <person name="Yang H."/>
        </authorList>
    </citation>
    <scope>NUCLEOTIDE SEQUENCE [LARGE SCALE GENOMIC DNA]</scope>
    <source>
        <strain>cv. 93-11</strain>
    </source>
</reference>
<accession>Q09J79</accession>
<dbReference type="EC" id="1.14.14.137" evidence="2"/>
<dbReference type="EMBL" id="DQ887714">
    <property type="protein sequence ID" value="ABI64254.1"/>
    <property type="molecule type" value="mRNA"/>
</dbReference>
<dbReference type="EMBL" id="CM000127">
    <property type="protein sequence ID" value="EAY87204.1"/>
    <property type="molecule type" value="Genomic_DNA"/>
</dbReference>
<dbReference type="SMR" id="Q09J79"/>
<dbReference type="STRING" id="39946.Q09J79"/>
<dbReference type="EnsemblPlants" id="BGIOSGA008883-TA">
    <property type="protein sequence ID" value="BGIOSGA008883-PA"/>
    <property type="gene ID" value="BGIOSGA008883"/>
</dbReference>
<dbReference type="EnsemblPlants" id="OsGoSa_02g0030350.01">
    <property type="protein sequence ID" value="OsGoSa_02g0030350.01"/>
    <property type="gene ID" value="OsGoSa_02g0030350"/>
</dbReference>
<dbReference type="EnsemblPlants" id="OsIR64_02g0029950.01">
    <property type="protein sequence ID" value="OsIR64_02g0029950.01"/>
    <property type="gene ID" value="OsIR64_02g0029950"/>
</dbReference>
<dbReference type="EnsemblPlants" id="OsKYG_02g0030020.01">
    <property type="protein sequence ID" value="OsKYG_02g0030020.01"/>
    <property type="gene ID" value="OsKYG_02g0030020"/>
</dbReference>
<dbReference type="EnsemblPlants" id="OsLaMu_02g0029840.01">
    <property type="protein sequence ID" value="OsLaMu_02g0029840.01"/>
    <property type="gene ID" value="OsLaMu_02g0029840"/>
</dbReference>
<dbReference type="EnsemblPlants" id="OsLima_02g0030260.01">
    <property type="protein sequence ID" value="OsLima_02g0030260.01"/>
    <property type="gene ID" value="OsLima_02g0030260"/>
</dbReference>
<dbReference type="EnsemblPlants" id="OsLiXu_02g0030200.01">
    <property type="protein sequence ID" value="OsLiXu_02g0030200.01"/>
    <property type="gene ID" value="OsLiXu_02g0030200"/>
</dbReference>
<dbReference type="EnsemblPlants" id="OsMH63_02G030580_01">
    <property type="protein sequence ID" value="OsMH63_02G030580_01"/>
    <property type="gene ID" value="OsMH63_02G030580"/>
</dbReference>
<dbReference type="EnsemblPlants" id="OsPr106_02g0030170.01">
    <property type="protein sequence ID" value="OsPr106_02g0030170.01"/>
    <property type="gene ID" value="OsPr106_02g0030170"/>
</dbReference>
<dbReference type="EnsemblPlants" id="OsZS97_02G029910_01">
    <property type="protein sequence ID" value="OsZS97_02G029910_01"/>
    <property type="gene ID" value="OsZS97_02G029910"/>
</dbReference>
<dbReference type="Gramene" id="BGIOSGA008883-TA">
    <property type="protein sequence ID" value="BGIOSGA008883-PA"/>
    <property type="gene ID" value="BGIOSGA008883"/>
</dbReference>
<dbReference type="Gramene" id="OsGoSa_02g0030350.01">
    <property type="protein sequence ID" value="OsGoSa_02g0030350.01"/>
    <property type="gene ID" value="OsGoSa_02g0030350"/>
</dbReference>
<dbReference type="Gramene" id="OsIR64_02g0029950.01">
    <property type="protein sequence ID" value="OsIR64_02g0029950.01"/>
    <property type="gene ID" value="OsIR64_02g0029950"/>
</dbReference>
<dbReference type="Gramene" id="OsKYG_02g0030020.01">
    <property type="protein sequence ID" value="OsKYG_02g0030020.01"/>
    <property type="gene ID" value="OsKYG_02g0030020"/>
</dbReference>
<dbReference type="Gramene" id="OsLaMu_02g0029840.01">
    <property type="protein sequence ID" value="OsLaMu_02g0029840.01"/>
    <property type="gene ID" value="OsLaMu_02g0029840"/>
</dbReference>
<dbReference type="Gramene" id="OsLima_02g0030260.01">
    <property type="protein sequence ID" value="OsLima_02g0030260.01"/>
    <property type="gene ID" value="OsLima_02g0030260"/>
</dbReference>
<dbReference type="Gramene" id="OsLiXu_02g0030200.01">
    <property type="protein sequence ID" value="OsLiXu_02g0030200.01"/>
    <property type="gene ID" value="OsLiXu_02g0030200"/>
</dbReference>
<dbReference type="Gramene" id="OsMH63_02G030580_01">
    <property type="protein sequence ID" value="OsMH63_02G030580_01"/>
    <property type="gene ID" value="OsMH63_02G030580"/>
</dbReference>
<dbReference type="Gramene" id="OsPr106_02g0030170.01">
    <property type="protein sequence ID" value="OsPr106_02g0030170.01"/>
    <property type="gene ID" value="OsPr106_02g0030170"/>
</dbReference>
<dbReference type="Gramene" id="OsZS97_02G029910_01">
    <property type="protein sequence ID" value="OsZS97_02G029910_01"/>
    <property type="gene ID" value="OsZS97_02G029910"/>
</dbReference>
<dbReference type="HOGENOM" id="CLU_001570_15_5_1"/>
<dbReference type="OMA" id="WDGQFVN"/>
<dbReference type="OrthoDB" id="1372046at2759"/>
<dbReference type="UniPathway" id="UPA00093"/>
<dbReference type="Proteomes" id="UP000007015">
    <property type="component" value="Chromosome 2"/>
</dbReference>
<dbReference type="GO" id="GO:0016020">
    <property type="term" value="C:membrane"/>
    <property type="evidence" value="ECO:0007669"/>
    <property type="project" value="UniProtKB-SubCell"/>
</dbReference>
<dbReference type="GO" id="GO:0010295">
    <property type="term" value="F:(+)-abscisic acid 8'-hydroxylase activity"/>
    <property type="evidence" value="ECO:0007669"/>
    <property type="project" value="UniProtKB-EC"/>
</dbReference>
<dbReference type="GO" id="GO:0020037">
    <property type="term" value="F:heme binding"/>
    <property type="evidence" value="ECO:0007669"/>
    <property type="project" value="InterPro"/>
</dbReference>
<dbReference type="GO" id="GO:0005506">
    <property type="term" value="F:iron ion binding"/>
    <property type="evidence" value="ECO:0007669"/>
    <property type="project" value="InterPro"/>
</dbReference>
<dbReference type="GO" id="GO:0046345">
    <property type="term" value="P:abscisic acid catabolic process"/>
    <property type="evidence" value="ECO:0007669"/>
    <property type="project" value="UniProtKB-UniPathway"/>
</dbReference>
<dbReference type="GO" id="GO:0016125">
    <property type="term" value="P:sterol metabolic process"/>
    <property type="evidence" value="ECO:0007669"/>
    <property type="project" value="TreeGrafter"/>
</dbReference>
<dbReference type="CDD" id="cd11043">
    <property type="entry name" value="CYP90-like"/>
    <property type="match status" value="1"/>
</dbReference>
<dbReference type="FunFam" id="1.10.630.10:FF:000014">
    <property type="entry name" value="Abscisic acid 8"/>
    <property type="match status" value="1"/>
</dbReference>
<dbReference type="Gene3D" id="1.10.630.10">
    <property type="entry name" value="Cytochrome P450"/>
    <property type="match status" value="1"/>
</dbReference>
<dbReference type="InterPro" id="IPR001128">
    <property type="entry name" value="Cyt_P450"/>
</dbReference>
<dbReference type="InterPro" id="IPR017972">
    <property type="entry name" value="Cyt_P450_CS"/>
</dbReference>
<dbReference type="InterPro" id="IPR002401">
    <property type="entry name" value="Cyt_P450_E_grp-I"/>
</dbReference>
<dbReference type="InterPro" id="IPR036396">
    <property type="entry name" value="Cyt_P450_sf"/>
</dbReference>
<dbReference type="PANTHER" id="PTHR24286:SF10">
    <property type="entry name" value="ABSCISIC ACID 8'-HYDROXYLASE 1"/>
    <property type="match status" value="1"/>
</dbReference>
<dbReference type="PANTHER" id="PTHR24286">
    <property type="entry name" value="CYTOCHROME P450 26"/>
    <property type="match status" value="1"/>
</dbReference>
<dbReference type="Pfam" id="PF00067">
    <property type="entry name" value="p450"/>
    <property type="match status" value="1"/>
</dbReference>
<dbReference type="PRINTS" id="PR00463">
    <property type="entry name" value="EP450I"/>
</dbReference>
<dbReference type="PRINTS" id="PR00385">
    <property type="entry name" value="P450"/>
</dbReference>
<dbReference type="SUPFAM" id="SSF48264">
    <property type="entry name" value="Cytochrome P450"/>
    <property type="match status" value="1"/>
</dbReference>
<dbReference type="PROSITE" id="PS00086">
    <property type="entry name" value="CYTOCHROME_P450"/>
    <property type="match status" value="1"/>
</dbReference>